<reference key="1">
    <citation type="journal article" date="2005" name="Nat. Biotechnol.">
        <title>Complete genome sequence of the plant commensal Pseudomonas fluorescens Pf-5.</title>
        <authorList>
            <person name="Paulsen I.T."/>
            <person name="Press C.M."/>
            <person name="Ravel J."/>
            <person name="Kobayashi D.Y."/>
            <person name="Myers G.S.A."/>
            <person name="Mavrodi D.V."/>
            <person name="DeBoy R.T."/>
            <person name="Seshadri R."/>
            <person name="Ren Q."/>
            <person name="Madupu R."/>
            <person name="Dodson R.J."/>
            <person name="Durkin A.S."/>
            <person name="Brinkac L.M."/>
            <person name="Daugherty S.C."/>
            <person name="Sullivan S.A."/>
            <person name="Rosovitz M.J."/>
            <person name="Gwinn M.L."/>
            <person name="Zhou L."/>
            <person name="Schneider D.J."/>
            <person name="Cartinhour S.W."/>
            <person name="Nelson W.C."/>
            <person name="Weidman J."/>
            <person name="Watkins K."/>
            <person name="Tran K."/>
            <person name="Khouri H."/>
            <person name="Pierson E.A."/>
            <person name="Pierson L.S. III"/>
            <person name="Thomashow L.S."/>
            <person name="Loper J.E."/>
        </authorList>
    </citation>
    <scope>NUCLEOTIDE SEQUENCE [LARGE SCALE GENOMIC DNA]</scope>
    <source>
        <strain>ATCC BAA-477 / NRRL B-23932 / Pf-5</strain>
    </source>
</reference>
<proteinExistence type="inferred from homology"/>
<protein>
    <recommendedName>
        <fullName evidence="1">Aliphatic sulfonates import ATP-binding protein SsuB 2</fullName>
        <ecNumber evidence="1">7.6.2.14</ecNumber>
    </recommendedName>
</protein>
<dbReference type="EC" id="7.6.2.14" evidence="1"/>
<dbReference type="EMBL" id="CP000076">
    <property type="protein sequence ID" value="AAY95124.1"/>
    <property type="molecule type" value="Genomic_DNA"/>
</dbReference>
<dbReference type="SMR" id="Q4K441"/>
<dbReference type="STRING" id="220664.PFL_5934"/>
<dbReference type="KEGG" id="pfl:PFL_5934"/>
<dbReference type="PATRIC" id="fig|220664.5.peg.6050"/>
<dbReference type="eggNOG" id="COG1116">
    <property type="taxonomic scope" value="Bacteria"/>
</dbReference>
<dbReference type="HOGENOM" id="CLU_000604_1_22_6"/>
<dbReference type="Proteomes" id="UP000008540">
    <property type="component" value="Chromosome"/>
</dbReference>
<dbReference type="GO" id="GO:0005886">
    <property type="term" value="C:plasma membrane"/>
    <property type="evidence" value="ECO:0007669"/>
    <property type="project" value="UniProtKB-SubCell"/>
</dbReference>
<dbReference type="GO" id="GO:0005524">
    <property type="term" value="F:ATP binding"/>
    <property type="evidence" value="ECO:0007669"/>
    <property type="project" value="UniProtKB-KW"/>
</dbReference>
<dbReference type="GO" id="GO:0016887">
    <property type="term" value="F:ATP hydrolysis activity"/>
    <property type="evidence" value="ECO:0007669"/>
    <property type="project" value="InterPro"/>
</dbReference>
<dbReference type="CDD" id="cd03293">
    <property type="entry name" value="ABC_NrtD_SsuB_transporters"/>
    <property type="match status" value="1"/>
</dbReference>
<dbReference type="FunFam" id="3.40.50.300:FF:000653">
    <property type="entry name" value="Aliphatic sulfonates import ATP-binding protein SsuB"/>
    <property type="match status" value="1"/>
</dbReference>
<dbReference type="Gene3D" id="3.40.50.300">
    <property type="entry name" value="P-loop containing nucleotide triphosphate hydrolases"/>
    <property type="match status" value="1"/>
</dbReference>
<dbReference type="InterPro" id="IPR003593">
    <property type="entry name" value="AAA+_ATPase"/>
</dbReference>
<dbReference type="InterPro" id="IPR003439">
    <property type="entry name" value="ABC_transporter-like_ATP-bd"/>
</dbReference>
<dbReference type="InterPro" id="IPR017871">
    <property type="entry name" value="ABC_transporter-like_CS"/>
</dbReference>
<dbReference type="InterPro" id="IPR050166">
    <property type="entry name" value="ABC_transporter_ATP-bind"/>
</dbReference>
<dbReference type="InterPro" id="IPR027417">
    <property type="entry name" value="P-loop_NTPase"/>
</dbReference>
<dbReference type="NCBIfam" id="NF008420">
    <property type="entry name" value="PRK11247.1"/>
    <property type="match status" value="1"/>
</dbReference>
<dbReference type="PANTHER" id="PTHR42788:SF17">
    <property type="entry name" value="ALIPHATIC SULFONATES IMPORT ATP-BINDING PROTEIN SSUB"/>
    <property type="match status" value="1"/>
</dbReference>
<dbReference type="PANTHER" id="PTHR42788">
    <property type="entry name" value="TAURINE IMPORT ATP-BINDING PROTEIN-RELATED"/>
    <property type="match status" value="1"/>
</dbReference>
<dbReference type="Pfam" id="PF00005">
    <property type="entry name" value="ABC_tran"/>
    <property type="match status" value="1"/>
</dbReference>
<dbReference type="SMART" id="SM00382">
    <property type="entry name" value="AAA"/>
    <property type="match status" value="1"/>
</dbReference>
<dbReference type="SUPFAM" id="SSF52540">
    <property type="entry name" value="P-loop containing nucleoside triphosphate hydrolases"/>
    <property type="match status" value="1"/>
</dbReference>
<dbReference type="PROSITE" id="PS00211">
    <property type="entry name" value="ABC_TRANSPORTER_1"/>
    <property type="match status" value="1"/>
</dbReference>
<dbReference type="PROSITE" id="PS50893">
    <property type="entry name" value="ABC_TRANSPORTER_2"/>
    <property type="match status" value="1"/>
</dbReference>
<dbReference type="PROSITE" id="PS51291">
    <property type="entry name" value="SSUB"/>
    <property type="match status" value="1"/>
</dbReference>
<name>SSUB2_PSEF5</name>
<keyword id="KW-0067">ATP-binding</keyword>
<keyword id="KW-0997">Cell inner membrane</keyword>
<keyword id="KW-1003">Cell membrane</keyword>
<keyword id="KW-0472">Membrane</keyword>
<keyword id="KW-0547">Nucleotide-binding</keyword>
<keyword id="KW-1278">Translocase</keyword>
<keyword id="KW-0813">Transport</keyword>
<comment type="function">
    <text evidence="1">Part of the ABC transporter complex SsuABC involved in aliphatic sulfonates import. Responsible for energy coupling to the transport system.</text>
</comment>
<comment type="catalytic activity">
    <reaction evidence="1">
        <text>ATP + H2O + aliphatic sulfonate-[sulfonate-binding protein]Side 1 = ADP + phosphate + aliphatic sulfonateSide 2 + [sulfonate-binding protein]Side 1.</text>
        <dbReference type="EC" id="7.6.2.14"/>
    </reaction>
</comment>
<comment type="subunit">
    <text evidence="1">The complex is composed of two ATP-binding proteins (SsuB), two transmembrane proteins (SsuC) and a solute-binding protein (SsuA).</text>
</comment>
<comment type="subcellular location">
    <subcellularLocation>
        <location evidence="1">Cell inner membrane</location>
        <topology evidence="1">Peripheral membrane protein</topology>
    </subcellularLocation>
</comment>
<comment type="similarity">
    <text evidence="1">Belongs to the ABC transporter superfamily. Aliphatic sulfonates importer (TC 3.A.1.17.2) family.</text>
</comment>
<feature type="chain" id="PRO_0000279933" description="Aliphatic sulfonates import ATP-binding protein SsuB 2">
    <location>
        <begin position="1"/>
        <end position="268"/>
    </location>
</feature>
<feature type="domain" description="ABC transporter" evidence="1">
    <location>
        <begin position="15"/>
        <end position="236"/>
    </location>
</feature>
<feature type="binding site" evidence="1">
    <location>
        <begin position="47"/>
        <end position="54"/>
    </location>
    <ligand>
        <name>ATP</name>
        <dbReference type="ChEBI" id="CHEBI:30616"/>
    </ligand>
</feature>
<gene>
    <name evidence="1" type="primary">ssuB2</name>
    <name type="ordered locus">PFL_5934</name>
</gene>
<accession>Q4K441</accession>
<evidence type="ECO:0000255" key="1">
    <source>
        <dbReference type="HAMAP-Rule" id="MF_01724"/>
    </source>
</evidence>
<organism>
    <name type="scientific">Pseudomonas fluorescens (strain ATCC BAA-477 / NRRL B-23932 / Pf-5)</name>
    <dbReference type="NCBI Taxonomy" id="220664"/>
    <lineage>
        <taxon>Bacteria</taxon>
        <taxon>Pseudomonadati</taxon>
        <taxon>Pseudomonadota</taxon>
        <taxon>Gammaproteobacteria</taxon>
        <taxon>Pseudomonadales</taxon>
        <taxon>Pseudomonadaceae</taxon>
        <taxon>Pseudomonas</taxon>
    </lineage>
</organism>
<sequence>MTAQQPPRLLQGIPLAVRKLQKTFGSRQVLREIDLHIPAGQFVAVVGRSGCGKSTLLRLLAGLDQPSAGELLAGSAPLSAAIEDTRLMFQEARLLPWKKVIDNVGLGLKGNWRPQALQALEAVGLADRAQEWPAALSGGQKQRVALARALIHQPRLLLLDEPLGALDALTRIEMQQLIERLWQQHGFTVLLVTHDVSEAVAIADRVILIEDGEVGLDLHVELPRPRVRGSHRLAALETEVLNRVLSLPGSPPEPEPVSPLPTQLRWAL</sequence>